<sequence length="184" mass="20242">MGAVLSCCRNHSGEENEALLREQQAGYGSQGNANDEYDAEQMRLKEHEHEQKLLAREQELRDIVANTNDKLIDISMINNSGIVIQGTDLQEALDKRQQEEGGDSREDERSAGDDNLSGHSVPSSGSAQATTHQTAPRTNTFTLLTSPDSAKISKEQLKKLHSNILNEIFSQSQVNKPGPLTVPF</sequence>
<accession>Q02205</accession>
<accession>D6VX73</accession>
<protein>
    <recommendedName>
        <fullName>Protein MEH1</fullName>
    </recommendedName>
    <alternativeName>
        <fullName>EGO complex subunit 1</fullName>
    </alternativeName>
    <alternativeName>
        <fullName>GSE complex subunit 2</fullName>
    </alternativeName>
</protein>
<evidence type="ECO:0000255" key="1"/>
<evidence type="ECO:0000256" key="2">
    <source>
        <dbReference type="SAM" id="MobiDB-lite"/>
    </source>
</evidence>
<evidence type="ECO:0000269" key="3">
    <source>
    </source>
</evidence>
<evidence type="ECO:0000269" key="4">
    <source>
    </source>
</evidence>
<evidence type="ECO:0000269" key="5">
    <source>
    </source>
</evidence>
<evidence type="ECO:0000269" key="6">
    <source>
    </source>
</evidence>
<evidence type="ECO:0000269" key="7">
    <source>
    </source>
</evidence>
<evidence type="ECO:0000305" key="8"/>
<evidence type="ECO:0000305" key="9">
    <source>
    </source>
</evidence>
<evidence type="ECO:0000305" key="10">
    <source>
    </source>
</evidence>
<evidence type="ECO:0007744" key="11">
    <source>
    </source>
</evidence>
<evidence type="ECO:0007744" key="12">
    <source>
    </source>
</evidence>
<evidence type="ECO:0007829" key="13">
    <source>
        <dbReference type="PDB" id="4XPM"/>
    </source>
</evidence>
<evidence type="ECO:0007829" key="14">
    <source>
        <dbReference type="PDB" id="6JWP"/>
    </source>
</evidence>
<name>MEH1_YEAST</name>
<reference key="1">
    <citation type="journal article" date="1992" name="Yeast">
        <title>DNA sequencing and analysis of a 24.7 kb segment encompassing centromere CEN11 of Saccharomyces cerevisiae reveals nine previously unknown open reading frames.</title>
        <authorList>
            <person name="Duesterhoeft A."/>
            <person name="Philippsen P."/>
        </authorList>
    </citation>
    <scope>NUCLEOTIDE SEQUENCE [GENOMIC DNA]</scope>
    <source>
        <strain>ATCC 204508 / S288c</strain>
    </source>
</reference>
<reference key="2">
    <citation type="journal article" date="1994" name="Nature">
        <title>Complete DNA sequence of yeast chromosome XI.</title>
        <authorList>
            <person name="Dujon B."/>
            <person name="Alexandraki D."/>
            <person name="Andre B."/>
            <person name="Ansorge W."/>
            <person name="Baladron V."/>
            <person name="Ballesta J.P.G."/>
            <person name="Banrevi A."/>
            <person name="Bolle P.-A."/>
            <person name="Bolotin-Fukuhara M."/>
            <person name="Bossier P."/>
            <person name="Bou G."/>
            <person name="Boyer J."/>
            <person name="Buitrago M.J."/>
            <person name="Cheret G."/>
            <person name="Colleaux L."/>
            <person name="Daignan-Fornier B."/>
            <person name="del Rey F."/>
            <person name="Dion C."/>
            <person name="Domdey H."/>
            <person name="Duesterhoeft A."/>
            <person name="Duesterhus S."/>
            <person name="Entian K.-D."/>
            <person name="Erfle H."/>
            <person name="Esteban P.F."/>
            <person name="Feldmann H."/>
            <person name="Fernandes L."/>
            <person name="Fobo G.M."/>
            <person name="Fritz C."/>
            <person name="Fukuhara H."/>
            <person name="Gabel C."/>
            <person name="Gaillon L."/>
            <person name="Garcia-Cantalejo J.M."/>
            <person name="Garcia-Ramirez J.J."/>
            <person name="Gent M.E."/>
            <person name="Ghazvini M."/>
            <person name="Goffeau A."/>
            <person name="Gonzalez A."/>
            <person name="Grothues D."/>
            <person name="Guerreiro P."/>
            <person name="Hegemann J.H."/>
            <person name="Hewitt N."/>
            <person name="Hilger F."/>
            <person name="Hollenberg C.P."/>
            <person name="Horaitis O."/>
            <person name="Indge K.J."/>
            <person name="Jacquier A."/>
            <person name="James C.M."/>
            <person name="Jauniaux J.-C."/>
            <person name="Jimenez A."/>
            <person name="Keuchel H."/>
            <person name="Kirchrath L."/>
            <person name="Kleine K."/>
            <person name="Koetter P."/>
            <person name="Legrain P."/>
            <person name="Liebl S."/>
            <person name="Louis E.J."/>
            <person name="Maia e Silva A."/>
            <person name="Marck C."/>
            <person name="Monnier A.-L."/>
            <person name="Moestl D."/>
            <person name="Mueller S."/>
            <person name="Obermaier B."/>
            <person name="Oliver S.G."/>
            <person name="Pallier C."/>
            <person name="Pascolo S."/>
            <person name="Pfeiffer F."/>
            <person name="Philippsen P."/>
            <person name="Planta R.J."/>
            <person name="Pohl F.M."/>
            <person name="Pohl T.M."/>
            <person name="Poehlmann R."/>
            <person name="Portetelle D."/>
            <person name="Purnelle B."/>
            <person name="Puzos V."/>
            <person name="Ramezani Rad M."/>
            <person name="Rasmussen S.W."/>
            <person name="Remacha M.A."/>
            <person name="Revuelta J.L."/>
            <person name="Richard G.-F."/>
            <person name="Rieger M."/>
            <person name="Rodrigues-Pousada C."/>
            <person name="Rose M."/>
            <person name="Rupp T."/>
            <person name="Santos M.A."/>
            <person name="Schwager C."/>
            <person name="Sensen C."/>
            <person name="Skala J."/>
            <person name="Soares H."/>
            <person name="Sor F."/>
            <person name="Stegemann J."/>
            <person name="Tettelin H."/>
            <person name="Thierry A."/>
            <person name="Tzermia M."/>
            <person name="Urrestarazu L.A."/>
            <person name="van Dyck L."/>
            <person name="van Vliet-Reedijk J.C."/>
            <person name="Valens M."/>
            <person name="Vandenbol M."/>
            <person name="Vilela C."/>
            <person name="Vissers S."/>
            <person name="von Wettstein D."/>
            <person name="Voss H."/>
            <person name="Wiemann S."/>
            <person name="Xu G."/>
            <person name="Zimmermann J."/>
            <person name="Haasemann M."/>
            <person name="Becker I."/>
            <person name="Mewes H.-W."/>
        </authorList>
    </citation>
    <scope>NUCLEOTIDE SEQUENCE [LARGE SCALE GENOMIC DNA]</scope>
    <source>
        <strain>ATCC 204508 / S288c</strain>
    </source>
</reference>
<reference key="3">
    <citation type="journal article" date="2014" name="G3 (Bethesda)">
        <title>The reference genome sequence of Saccharomyces cerevisiae: Then and now.</title>
        <authorList>
            <person name="Engel S.R."/>
            <person name="Dietrich F.S."/>
            <person name="Fisk D.G."/>
            <person name="Binkley G."/>
            <person name="Balakrishnan R."/>
            <person name="Costanzo M.C."/>
            <person name="Dwight S.S."/>
            <person name="Hitz B.C."/>
            <person name="Karra K."/>
            <person name="Nash R.S."/>
            <person name="Weng S."/>
            <person name="Wong E.D."/>
            <person name="Lloyd P."/>
            <person name="Skrzypek M.S."/>
            <person name="Miyasato S.R."/>
            <person name="Simison M."/>
            <person name="Cherry J.M."/>
        </authorList>
    </citation>
    <scope>GENOME REANNOTATION</scope>
    <source>
        <strain>ATCC 204508 / S288c</strain>
    </source>
</reference>
<reference key="4">
    <citation type="journal article" date="2003" name="Nature">
        <title>Global analysis of protein expression in yeast.</title>
        <authorList>
            <person name="Ghaemmaghami S."/>
            <person name="Huh W.-K."/>
            <person name="Bower K."/>
            <person name="Howson R.W."/>
            <person name="Belle A."/>
            <person name="Dephoure N."/>
            <person name="O'Shea E.K."/>
            <person name="Weissman J.S."/>
        </authorList>
    </citation>
    <scope>LEVEL OF PROTEIN EXPRESSION [LARGE SCALE ANALYSIS]</scope>
</reference>
<reference key="5">
    <citation type="journal article" date="2005" name="Mol. Cell">
        <title>The TOR and EGO protein complexes orchestrate microautophagy in yeast.</title>
        <authorList>
            <person name="Dubouloz F."/>
            <person name="Deloche O."/>
            <person name="Wanke V."/>
            <person name="Cameroni E."/>
            <person name="De Virgilio C."/>
        </authorList>
    </citation>
    <scope>FUNCTION</scope>
    <scope>IDENTIFICATION IN THE EGO COMPLEX</scope>
    <scope>SUBCELLULAR LOCATION</scope>
</reference>
<reference key="6">
    <citation type="journal article" date="2006" name="Cell">
        <title>Global analysis of protein palmitoylation in yeast.</title>
        <authorList>
            <person name="Roth A.F."/>
            <person name="Wan J."/>
            <person name="Bailey A.O."/>
            <person name="Sun B."/>
            <person name="Kuchar J.A."/>
            <person name="Green W.N."/>
            <person name="Phinney B.S."/>
            <person name="Yates J.R. III"/>
            <person name="Davis N.G."/>
        </authorList>
    </citation>
    <scope>PALMITOYLATION AT CYS-7 AND CYS-8</scope>
</reference>
<reference key="7">
    <citation type="journal article" date="2006" name="Nat. Cell Biol.">
        <title>A conserved GTPase-containing complex is required for intracellular sorting of the general amino-acid permease in yeast.</title>
        <authorList>
            <person name="Gao M."/>
            <person name="Kaiser C.A."/>
        </authorList>
    </citation>
    <scope>FUNCTION</scope>
    <scope>IDENTIFICATION BY MASS SPECTROMETRY</scope>
    <scope>IDENTIFICATION IN THE GSE COMPLEX</scope>
    <scope>MYRISTOYLATION AT GLY-2</scope>
</reference>
<reference key="8">
    <citation type="journal article" date="2007" name="J. Proteome Res.">
        <title>Large-scale phosphorylation analysis of alpha-factor-arrested Saccharomyces cerevisiae.</title>
        <authorList>
            <person name="Li X."/>
            <person name="Gerber S.A."/>
            <person name="Rudner A.D."/>
            <person name="Beausoleil S.A."/>
            <person name="Haas W."/>
            <person name="Villen J."/>
            <person name="Elias J.E."/>
            <person name="Gygi S.P."/>
        </authorList>
    </citation>
    <scope>PHOSPHORYLATION [LARGE SCALE ANALYSIS] AT SER-146 AND SER-149</scope>
    <scope>IDENTIFICATION BY MASS SPECTROMETRY [LARGE SCALE ANALYSIS]</scope>
    <source>
        <strain>ADR376</strain>
    </source>
</reference>
<reference key="9">
    <citation type="journal article" date="2008" name="Mol. Cell. Proteomics">
        <title>A multidimensional chromatography technology for in-depth phosphoproteome analysis.</title>
        <authorList>
            <person name="Albuquerque C.P."/>
            <person name="Smolka M.B."/>
            <person name="Payne S.H."/>
            <person name="Bafna V."/>
            <person name="Eng J."/>
            <person name="Zhou H."/>
        </authorList>
    </citation>
    <scope>IDENTIFICATION BY MASS SPECTROMETRY [LARGE SCALE ANALYSIS]</scope>
</reference>
<reference key="10">
    <citation type="journal article" date="2009" name="Science">
        <title>Global analysis of Cdk1 substrate phosphorylation sites provides insights into evolution.</title>
        <authorList>
            <person name="Holt L.J."/>
            <person name="Tuch B.B."/>
            <person name="Villen J."/>
            <person name="Johnson A.D."/>
            <person name="Gygi S.P."/>
            <person name="Morgan D.O."/>
        </authorList>
    </citation>
    <scope>PHOSPHORYLATION [LARGE SCALE ANALYSIS] AT SER-146 AND SER-149</scope>
    <scope>IDENTIFICATION BY MASS SPECTROMETRY [LARGE SCALE ANALYSIS]</scope>
</reference>
<reference key="11">
    <citation type="journal article" date="2018" name="PLoS Genet.">
        <title>Gtr/Ego-independent TORC1 activation is achieved through a glutamine-sensitive interaction with Pib2 on the vacuolar membrane.</title>
        <authorList>
            <person name="Ukai H."/>
            <person name="Araki Y."/>
            <person name="Kira S."/>
            <person name="Oikawa Y."/>
            <person name="May A.I."/>
            <person name="Noda T."/>
        </authorList>
    </citation>
    <scope>DISRUPTION PHENOTYPE</scope>
</reference>
<reference key="12">
    <citation type="journal article" date="2020" name="J. Cell Sci.">
        <title>Amino acid homeostatic control by TORC1 in Saccharomyces cerevisiae under high hydrostatic pressure.</title>
        <authorList>
            <person name="Uemura S."/>
            <person name="Mochizuki T."/>
            <person name="Amemiya K."/>
            <person name="Kurosaka G."/>
            <person name="Yazawa M."/>
            <person name="Nakamoto K."/>
            <person name="Ishikawa Y."/>
            <person name="Izawa S."/>
            <person name="Abe F."/>
        </authorList>
    </citation>
    <scope>DISRUPTION PHENOTYPE</scope>
</reference>
<keyword id="KW-0002">3D-structure</keyword>
<keyword id="KW-0072">Autophagy</keyword>
<keyword id="KW-0175">Coiled coil</keyword>
<keyword id="KW-0449">Lipoprotein</keyword>
<keyword id="KW-0472">Membrane</keyword>
<keyword id="KW-0519">Myristate</keyword>
<keyword id="KW-0564">Palmitate</keyword>
<keyword id="KW-0597">Phosphoprotein</keyword>
<keyword id="KW-0653">Protein transport</keyword>
<keyword id="KW-1185">Reference proteome</keyword>
<keyword id="KW-0813">Transport</keyword>
<keyword id="KW-0926">Vacuole</keyword>
<comment type="function">
    <text evidence="4 5">Component of the GSE complex, a GTPase complex required for intracellular sorting of GAP1 out of the endosome (PubMed:16732272). Component of the EGO complex, a complex involved in the regulation of microautophagy (PubMed:15989961).</text>
</comment>
<comment type="subunit">
    <text evidence="4 5">Component of the GSE complex composed of GTR1, GTR2, SLM4, MEH1 and LTV1. Component of the EGO complex, at least composed of GTR2, SLM4 and MEH1.</text>
</comment>
<comment type="interaction">
    <interactant intactId="EBI-27062">
        <id>Q02205</id>
    </interactant>
    <interactant intactId="EBI-7954">
        <id>Q00582</id>
        <label>GTR1</label>
    </interactant>
    <organismsDiffer>false</organismsDiffer>
    <experiments>4</experiments>
</comment>
<comment type="interaction">
    <interactant intactId="EBI-27062">
        <id>Q02205</id>
    </interactant>
    <interactant intactId="EBI-7962">
        <id>P53290</id>
        <label>GTR2</label>
    </interactant>
    <organismsDiffer>false</organismsDiffer>
    <experiments>3</experiments>
</comment>
<comment type="interaction">
    <interactant intactId="EBI-27062">
        <id>Q02205</id>
    </interactant>
    <interactant intactId="EBI-21507">
        <id>P38247</id>
        <label>SLM4</label>
    </interactant>
    <organismsDiffer>false</organismsDiffer>
    <experiments>5</experiments>
</comment>
<comment type="subcellular location">
    <subcellularLocation>
        <location evidence="4">Vacuole membrane</location>
    </subcellularLocation>
</comment>
<comment type="disruption phenotype">
    <text evidence="6 7">Abnormal activation of TORC1 signaling during high hydrostatic pressure (mechanical stress) (PubMed:32801125). Abnormal punctate localization of TOR1 (PubMed:32801125). Increases cellular levels of glutamine and alanine during high hydrostatic pressure (mechanical stress) (PubMed:32801125). Sensitive to rapamycin and high hydrostatic pressure (mechanical stress) (PubMed:29698392, PubMed:32801125). Simultaneous disruption of PIB2 results in loss of viability (PubMed:29698392).</text>
</comment>
<comment type="miscellaneous">
    <text evidence="3">Present with 2740 molecules/cell in log phase SD medium.</text>
</comment>
<dbReference type="EMBL" id="X65124">
    <property type="protein sequence ID" value="CAA46245.1"/>
    <property type="molecule type" value="Genomic_DNA"/>
</dbReference>
<dbReference type="EMBL" id="Z28232">
    <property type="protein sequence ID" value="CAA82077.1"/>
    <property type="molecule type" value="Genomic_DNA"/>
</dbReference>
<dbReference type="EMBL" id="BK006944">
    <property type="protein sequence ID" value="DAA09163.1"/>
    <property type="molecule type" value="Genomic_DNA"/>
</dbReference>
<dbReference type="PIR" id="S25815">
    <property type="entry name" value="S25815"/>
</dbReference>
<dbReference type="RefSeq" id="NP_012932.1">
    <property type="nucleotide sequence ID" value="NM_001179797.1"/>
</dbReference>
<dbReference type="PDB" id="4XPM">
    <property type="method" value="X-ray"/>
    <property type="resolution" value="2.40 A"/>
    <property type="chains" value="A=146-184"/>
</dbReference>
<dbReference type="PDB" id="6JWP">
    <property type="method" value="X-ray"/>
    <property type="resolution" value="3.20 A"/>
    <property type="chains" value="C/H=33-184"/>
</dbReference>
<dbReference type="PDBsum" id="4XPM"/>
<dbReference type="PDBsum" id="6JWP"/>
<dbReference type="SMR" id="Q02205"/>
<dbReference type="BioGRID" id="34139">
    <property type="interactions" value="358"/>
</dbReference>
<dbReference type="ComplexPortal" id="CPX-3172">
    <property type="entry name" value="EGO complex"/>
</dbReference>
<dbReference type="ComplexPortal" id="CPX-3233">
    <property type="entry name" value="GSE complex"/>
</dbReference>
<dbReference type="DIP" id="DIP-1922N"/>
<dbReference type="FunCoup" id="Q02205">
    <property type="interactions" value="130"/>
</dbReference>
<dbReference type="IntAct" id="Q02205">
    <property type="interactions" value="15"/>
</dbReference>
<dbReference type="MINT" id="Q02205"/>
<dbReference type="STRING" id="4932.YKR007W"/>
<dbReference type="iPTMnet" id="Q02205"/>
<dbReference type="SwissPalm" id="Q02205"/>
<dbReference type="PaxDb" id="4932-YKR007W"/>
<dbReference type="PeptideAtlas" id="Q02205"/>
<dbReference type="EnsemblFungi" id="YKR007W_mRNA">
    <property type="protein sequence ID" value="YKR007W"/>
    <property type="gene ID" value="YKR007W"/>
</dbReference>
<dbReference type="GeneID" id="853876"/>
<dbReference type="KEGG" id="sce:YKR007W"/>
<dbReference type="AGR" id="SGD:S000001715"/>
<dbReference type="SGD" id="S000001715">
    <property type="gene designation" value="MEH1"/>
</dbReference>
<dbReference type="VEuPathDB" id="FungiDB:YKR007W"/>
<dbReference type="eggNOG" id="ENOG502S74H">
    <property type="taxonomic scope" value="Eukaryota"/>
</dbReference>
<dbReference type="HOGENOM" id="CLU_136947_0_0_1"/>
<dbReference type="InParanoid" id="Q02205"/>
<dbReference type="OMA" id="TKETRGH"/>
<dbReference type="OrthoDB" id="4067878at2759"/>
<dbReference type="BioCyc" id="YEAST:G3O-31985-MONOMER"/>
<dbReference type="BioGRID-ORCS" id="853876">
    <property type="hits" value="0 hits in 10 CRISPR screens"/>
</dbReference>
<dbReference type="PRO" id="PR:Q02205"/>
<dbReference type="Proteomes" id="UP000002311">
    <property type="component" value="Chromosome XI"/>
</dbReference>
<dbReference type="RNAct" id="Q02205">
    <property type="molecule type" value="protein"/>
</dbReference>
<dbReference type="GO" id="GO:0005829">
    <property type="term" value="C:cytosol"/>
    <property type="evidence" value="ECO:0007005"/>
    <property type="project" value="SGD"/>
</dbReference>
<dbReference type="GO" id="GO:0000329">
    <property type="term" value="C:fungal-type vacuole membrane"/>
    <property type="evidence" value="ECO:0000314"/>
    <property type="project" value="SGD"/>
</dbReference>
<dbReference type="GO" id="GO:0005770">
    <property type="term" value="C:late endosome"/>
    <property type="evidence" value="ECO:0000314"/>
    <property type="project" value="ComplexPortal"/>
</dbReference>
<dbReference type="GO" id="GO:0031902">
    <property type="term" value="C:late endosome membrane"/>
    <property type="evidence" value="ECO:0000314"/>
    <property type="project" value="SGD"/>
</dbReference>
<dbReference type="GO" id="GO:0045121">
    <property type="term" value="C:membrane raft"/>
    <property type="evidence" value="ECO:0007669"/>
    <property type="project" value="InterPro"/>
</dbReference>
<dbReference type="GO" id="GO:0071986">
    <property type="term" value="C:Ragulator complex"/>
    <property type="evidence" value="ECO:0000314"/>
    <property type="project" value="SGD"/>
</dbReference>
<dbReference type="GO" id="GO:0071230">
    <property type="term" value="P:cellular response to amino acid stimulus"/>
    <property type="evidence" value="ECO:0007669"/>
    <property type="project" value="InterPro"/>
</dbReference>
<dbReference type="GO" id="GO:0032456">
    <property type="term" value="P:endocytic recycling"/>
    <property type="evidence" value="ECO:0000314"/>
    <property type="project" value="ComplexPortal"/>
</dbReference>
<dbReference type="GO" id="GO:0016237">
    <property type="term" value="P:microautophagy"/>
    <property type="evidence" value="ECO:0000315"/>
    <property type="project" value="SGD"/>
</dbReference>
<dbReference type="GO" id="GO:0043410">
    <property type="term" value="P:positive regulation of MAPK cascade"/>
    <property type="evidence" value="ECO:0007669"/>
    <property type="project" value="InterPro"/>
</dbReference>
<dbReference type="GO" id="GO:0032008">
    <property type="term" value="P:positive regulation of TOR signaling"/>
    <property type="evidence" value="ECO:0000303"/>
    <property type="project" value="ComplexPortal"/>
</dbReference>
<dbReference type="GO" id="GO:0072665">
    <property type="term" value="P:protein localization to vacuole"/>
    <property type="evidence" value="ECO:0000315"/>
    <property type="project" value="SGD"/>
</dbReference>
<dbReference type="GO" id="GO:0015031">
    <property type="term" value="P:protein transport"/>
    <property type="evidence" value="ECO:0007669"/>
    <property type="project" value="UniProtKB-KW"/>
</dbReference>
<dbReference type="GO" id="GO:0001919">
    <property type="term" value="P:regulation of receptor recycling"/>
    <property type="evidence" value="ECO:0007669"/>
    <property type="project" value="InterPro"/>
</dbReference>
<dbReference type="GO" id="GO:0007035">
    <property type="term" value="P:vacuolar acidification"/>
    <property type="evidence" value="ECO:0000315"/>
    <property type="project" value="SGD"/>
</dbReference>
<dbReference type="InterPro" id="IPR028209">
    <property type="entry name" value="LAMTOR1/MEH1"/>
</dbReference>
<dbReference type="Pfam" id="PF15454">
    <property type="entry name" value="LAMTOR"/>
    <property type="match status" value="1"/>
</dbReference>
<dbReference type="SMART" id="SM01262">
    <property type="entry name" value="LAMTOR"/>
    <property type="match status" value="1"/>
</dbReference>
<gene>
    <name type="primary">MEH1</name>
    <name type="synonym">EGO1</name>
    <name type="synonym">GSE2</name>
    <name type="ordered locus">YKR007W</name>
    <name type="ORF">YK106</name>
</gene>
<feature type="initiator methionine" description="Removed" evidence="8">
    <location>
        <position position="1"/>
    </location>
</feature>
<feature type="chain" id="PRO_0000203193" description="Protein MEH1">
    <location>
        <begin position="2"/>
        <end position="184"/>
    </location>
</feature>
<feature type="region of interest" description="Disordered" evidence="2">
    <location>
        <begin position="89"/>
        <end position="147"/>
    </location>
</feature>
<feature type="coiled-coil region" evidence="1">
    <location>
        <begin position="30"/>
        <end position="71"/>
    </location>
</feature>
<feature type="compositionally biased region" description="Basic and acidic residues" evidence="2">
    <location>
        <begin position="92"/>
        <end position="112"/>
    </location>
</feature>
<feature type="compositionally biased region" description="Polar residues" evidence="2">
    <location>
        <begin position="117"/>
        <end position="147"/>
    </location>
</feature>
<feature type="modified residue" description="Phosphoserine" evidence="11 12">
    <location>
        <position position="146"/>
    </location>
</feature>
<feature type="modified residue" description="Phosphoserine" evidence="11 12">
    <location>
        <position position="149"/>
    </location>
</feature>
<feature type="lipid moiety-binding region" description="N-myristoyl glycine" evidence="9">
    <location>
        <position position="2"/>
    </location>
</feature>
<feature type="lipid moiety-binding region" description="S-palmitoyl cysteine" evidence="10">
    <location>
        <position position="7"/>
    </location>
</feature>
<feature type="lipid moiety-binding region" description="S-palmitoyl cysteine" evidence="10">
    <location>
        <position position="8"/>
    </location>
</feature>
<feature type="helix" evidence="14">
    <location>
        <begin position="44"/>
        <end position="70"/>
    </location>
</feature>
<feature type="helix" evidence="14">
    <location>
        <begin position="74"/>
        <end position="79"/>
    </location>
</feature>
<feature type="strand" evidence="14">
    <location>
        <begin position="82"/>
        <end position="85"/>
    </location>
</feature>
<feature type="helix" evidence="14">
    <location>
        <begin position="88"/>
        <end position="93"/>
    </location>
</feature>
<feature type="strand" evidence="14">
    <location>
        <begin position="142"/>
        <end position="144"/>
    </location>
</feature>
<feature type="helix" evidence="14">
    <location>
        <begin position="147"/>
        <end position="149"/>
    </location>
</feature>
<feature type="strand" evidence="13">
    <location>
        <begin position="150"/>
        <end position="152"/>
    </location>
</feature>
<feature type="helix" evidence="13">
    <location>
        <begin position="154"/>
        <end position="171"/>
    </location>
</feature>
<feature type="strand" evidence="13">
    <location>
        <begin position="180"/>
        <end position="182"/>
    </location>
</feature>
<proteinExistence type="evidence at protein level"/>
<organism>
    <name type="scientific">Saccharomyces cerevisiae (strain ATCC 204508 / S288c)</name>
    <name type="common">Baker's yeast</name>
    <dbReference type="NCBI Taxonomy" id="559292"/>
    <lineage>
        <taxon>Eukaryota</taxon>
        <taxon>Fungi</taxon>
        <taxon>Dikarya</taxon>
        <taxon>Ascomycota</taxon>
        <taxon>Saccharomycotina</taxon>
        <taxon>Saccharomycetes</taxon>
        <taxon>Saccharomycetales</taxon>
        <taxon>Saccharomycetaceae</taxon>
        <taxon>Saccharomyces</taxon>
    </lineage>
</organism>